<gene>
    <name evidence="2" type="primary">tufA</name>
    <name type="ordered locus">STY4353</name>
    <name type="ordered locus">t4060</name>
</gene>
<gene>
    <name evidence="2" type="primary">tufB</name>
    <name type="ordered locus">STY3739</name>
    <name type="ordered locus">t3481</name>
</gene>
<organism>
    <name type="scientific">Salmonella typhi</name>
    <dbReference type="NCBI Taxonomy" id="90370"/>
    <lineage>
        <taxon>Bacteria</taxon>
        <taxon>Pseudomonadati</taxon>
        <taxon>Pseudomonadota</taxon>
        <taxon>Gammaproteobacteria</taxon>
        <taxon>Enterobacterales</taxon>
        <taxon>Enterobacteriaceae</taxon>
        <taxon>Salmonella</taxon>
    </lineage>
</organism>
<sequence length="394" mass="43284">MSKEKFERTKPHVNVGTIGHVDHGKTTLTAAITTVLAKTYGGAARAFDQIDNAPEEKARGITINTSHVEYDTPTRHYAHVDCPGHADYVKNMITGAAQMDGAILVVAATDGPMPQTREHILLGRQVGVPYIIVFLNKCDMVDDEELLELVEMEVRELLSQYDFPGDDTPIVRGSALKALEGDAEWEAKIIELAGFLDSYIPEPERAIDKPFLLPIEDVFSISGRGTVVTGRVERGIIKVGEEVEIVGIKETQKSTCTGVEMFRKLLDEGRAGENVGVLLRGIKREEIERGQVLAKPGTIKPHTKFESEVYILSKDEGGRHTPFFKGYRPQFYFRTTDVTGTIELPEGVEMVMPGDNIKMVVTLIHPIAMDDGLRFAIREGGRTVGAGVVAKVLG</sequence>
<protein>
    <recommendedName>
        <fullName evidence="2">Elongation factor Tu</fullName>
        <shortName evidence="2">EF-Tu</shortName>
        <ecNumber evidence="2">3.6.5.3</ecNumber>
    </recommendedName>
</protein>
<accession>P0A1H6</accession>
<accession>P21694</accession>
<evidence type="ECO:0000250" key="1"/>
<evidence type="ECO:0000255" key="2">
    <source>
        <dbReference type="HAMAP-Rule" id="MF_00118"/>
    </source>
</evidence>
<name>EFTU_SALTI</name>
<comment type="function">
    <text evidence="2">GTP hydrolase that promotes the GTP-dependent binding of aminoacyl-tRNA to the A-site of ribosomes during protein biosynthesis.</text>
</comment>
<comment type="catalytic activity">
    <reaction evidence="2">
        <text>GTP + H2O = GDP + phosphate + H(+)</text>
        <dbReference type="Rhea" id="RHEA:19669"/>
        <dbReference type="ChEBI" id="CHEBI:15377"/>
        <dbReference type="ChEBI" id="CHEBI:15378"/>
        <dbReference type="ChEBI" id="CHEBI:37565"/>
        <dbReference type="ChEBI" id="CHEBI:43474"/>
        <dbReference type="ChEBI" id="CHEBI:58189"/>
        <dbReference type="EC" id="3.6.5.3"/>
    </reaction>
    <physiologicalReaction direction="left-to-right" evidence="2">
        <dbReference type="Rhea" id="RHEA:19670"/>
    </physiologicalReaction>
</comment>
<comment type="subunit">
    <text evidence="2">Monomer.</text>
</comment>
<comment type="subcellular location">
    <subcellularLocation>
        <location evidence="2">Cytoplasm</location>
    </subcellularLocation>
</comment>
<comment type="similarity">
    <text evidence="2">Belongs to the TRAFAC class translation factor GTPase superfamily. Classic translation factor GTPase family. EF-Tu/EF-1A subfamily.</text>
</comment>
<keyword id="KW-0963">Cytoplasm</keyword>
<keyword id="KW-0251">Elongation factor</keyword>
<keyword id="KW-0342">GTP-binding</keyword>
<keyword id="KW-0378">Hydrolase</keyword>
<keyword id="KW-0460">Magnesium</keyword>
<keyword id="KW-0479">Metal-binding</keyword>
<keyword id="KW-0488">Methylation</keyword>
<keyword id="KW-0547">Nucleotide-binding</keyword>
<keyword id="KW-0597">Phosphoprotein</keyword>
<keyword id="KW-0648">Protein biosynthesis</keyword>
<reference key="1">
    <citation type="journal article" date="2001" name="Nature">
        <title>Complete genome sequence of a multiple drug resistant Salmonella enterica serovar Typhi CT18.</title>
        <authorList>
            <person name="Parkhill J."/>
            <person name="Dougan G."/>
            <person name="James K.D."/>
            <person name="Thomson N.R."/>
            <person name="Pickard D."/>
            <person name="Wain J."/>
            <person name="Churcher C.M."/>
            <person name="Mungall K.L."/>
            <person name="Bentley S.D."/>
            <person name="Holden M.T.G."/>
            <person name="Sebaihia M."/>
            <person name="Baker S."/>
            <person name="Basham D."/>
            <person name="Brooks K."/>
            <person name="Chillingworth T."/>
            <person name="Connerton P."/>
            <person name="Cronin A."/>
            <person name="Davis P."/>
            <person name="Davies R.M."/>
            <person name="Dowd L."/>
            <person name="White N."/>
            <person name="Farrar J."/>
            <person name="Feltwell T."/>
            <person name="Hamlin N."/>
            <person name="Haque A."/>
            <person name="Hien T.T."/>
            <person name="Holroyd S."/>
            <person name="Jagels K."/>
            <person name="Krogh A."/>
            <person name="Larsen T.S."/>
            <person name="Leather S."/>
            <person name="Moule S."/>
            <person name="O'Gaora P."/>
            <person name="Parry C."/>
            <person name="Quail M.A."/>
            <person name="Rutherford K.M."/>
            <person name="Simmonds M."/>
            <person name="Skelton J."/>
            <person name="Stevens K."/>
            <person name="Whitehead S."/>
            <person name="Barrell B.G."/>
        </authorList>
    </citation>
    <scope>NUCLEOTIDE SEQUENCE [LARGE SCALE GENOMIC DNA]</scope>
    <source>
        <strain>CT18</strain>
    </source>
</reference>
<reference key="2">
    <citation type="journal article" date="2003" name="J. Bacteriol.">
        <title>Comparative genomics of Salmonella enterica serovar Typhi strains Ty2 and CT18.</title>
        <authorList>
            <person name="Deng W."/>
            <person name="Liou S.-R."/>
            <person name="Plunkett G. III"/>
            <person name="Mayhew G.F."/>
            <person name="Rose D.J."/>
            <person name="Burland V."/>
            <person name="Kodoyianni V."/>
            <person name="Schwartz D.C."/>
            <person name="Blattner F.R."/>
        </authorList>
    </citation>
    <scope>NUCLEOTIDE SEQUENCE [LARGE SCALE GENOMIC DNA]</scope>
    <source>
        <strain>ATCC 700931 / Ty2</strain>
    </source>
</reference>
<feature type="initiator methionine" description="Removed" evidence="1">
    <location>
        <position position="1"/>
    </location>
</feature>
<feature type="chain" id="PRO_0000091383" description="Elongation factor Tu">
    <location>
        <begin position="2"/>
        <end position="394"/>
    </location>
</feature>
<feature type="domain" description="tr-type G">
    <location>
        <begin position="10"/>
        <end position="204"/>
    </location>
</feature>
<feature type="region of interest" description="G1" evidence="1">
    <location>
        <begin position="19"/>
        <end position="26"/>
    </location>
</feature>
<feature type="region of interest" description="G2" evidence="1">
    <location>
        <begin position="60"/>
        <end position="64"/>
    </location>
</feature>
<feature type="region of interest" description="G3" evidence="1">
    <location>
        <begin position="81"/>
        <end position="84"/>
    </location>
</feature>
<feature type="region of interest" description="G4" evidence="1">
    <location>
        <begin position="136"/>
        <end position="139"/>
    </location>
</feature>
<feature type="region of interest" description="G5" evidence="1">
    <location>
        <begin position="174"/>
        <end position="176"/>
    </location>
</feature>
<feature type="binding site" evidence="2">
    <location>
        <begin position="19"/>
        <end position="26"/>
    </location>
    <ligand>
        <name>GTP</name>
        <dbReference type="ChEBI" id="CHEBI:37565"/>
    </ligand>
</feature>
<feature type="binding site" evidence="2">
    <location>
        <position position="26"/>
    </location>
    <ligand>
        <name>Mg(2+)</name>
        <dbReference type="ChEBI" id="CHEBI:18420"/>
    </ligand>
</feature>
<feature type="binding site" evidence="2">
    <location>
        <begin position="81"/>
        <end position="85"/>
    </location>
    <ligand>
        <name>GTP</name>
        <dbReference type="ChEBI" id="CHEBI:37565"/>
    </ligand>
</feature>
<feature type="binding site" evidence="2">
    <location>
        <begin position="136"/>
        <end position="139"/>
    </location>
    <ligand>
        <name>GTP</name>
        <dbReference type="ChEBI" id="CHEBI:37565"/>
    </ligand>
</feature>
<feature type="modified residue" description="N6,N6-dimethyllysine" evidence="1">
    <location>
        <position position="57"/>
    </location>
</feature>
<feature type="modified residue" description="Phosphothreonine" evidence="1">
    <location>
        <position position="383"/>
    </location>
</feature>
<dbReference type="EC" id="3.6.5.3" evidence="2"/>
<dbReference type="EMBL" id="AL513382">
    <property type="protein sequence ID" value="CAD09494.1"/>
    <property type="molecule type" value="Genomic_DNA"/>
</dbReference>
<dbReference type="EMBL" id="AL513382">
    <property type="protein sequence ID" value="CAD08168.1"/>
    <property type="molecule type" value="Genomic_DNA"/>
</dbReference>
<dbReference type="EMBL" id="AE014613">
    <property type="protein sequence ID" value="AAO70997.1"/>
    <property type="molecule type" value="Genomic_DNA"/>
</dbReference>
<dbReference type="EMBL" id="AE014613">
    <property type="protein sequence ID" value="AAO71527.1"/>
    <property type="molecule type" value="Genomic_DNA"/>
</dbReference>
<dbReference type="RefSeq" id="NP_457924.1">
    <property type="nucleotide sequence ID" value="NC_003198.1"/>
</dbReference>
<dbReference type="RefSeq" id="NP_458455.1">
    <property type="nucleotide sequence ID" value="NC_003198.1"/>
</dbReference>
<dbReference type="SMR" id="P0A1H6"/>
<dbReference type="STRING" id="220341.gene:17587595"/>
<dbReference type="KEGG" id="stt:t3481"/>
<dbReference type="KEGG" id="stt:t4060"/>
<dbReference type="KEGG" id="sty:STY3739"/>
<dbReference type="KEGG" id="sty:STY4353"/>
<dbReference type="PATRIC" id="fig|220341.7.peg.3812"/>
<dbReference type="eggNOG" id="COG0050">
    <property type="taxonomic scope" value="Bacteria"/>
</dbReference>
<dbReference type="HOGENOM" id="CLU_007265_0_2_6"/>
<dbReference type="OMA" id="EGDKEWG"/>
<dbReference type="Proteomes" id="UP000000541">
    <property type="component" value="Chromosome"/>
</dbReference>
<dbReference type="Proteomes" id="UP000002670">
    <property type="component" value="Chromosome"/>
</dbReference>
<dbReference type="GO" id="GO:0005829">
    <property type="term" value="C:cytosol"/>
    <property type="evidence" value="ECO:0007669"/>
    <property type="project" value="TreeGrafter"/>
</dbReference>
<dbReference type="GO" id="GO:0005525">
    <property type="term" value="F:GTP binding"/>
    <property type="evidence" value="ECO:0007669"/>
    <property type="project" value="UniProtKB-UniRule"/>
</dbReference>
<dbReference type="GO" id="GO:0003924">
    <property type="term" value="F:GTPase activity"/>
    <property type="evidence" value="ECO:0007669"/>
    <property type="project" value="InterPro"/>
</dbReference>
<dbReference type="GO" id="GO:0097216">
    <property type="term" value="F:guanosine tetraphosphate binding"/>
    <property type="evidence" value="ECO:0007669"/>
    <property type="project" value="UniProtKB-ARBA"/>
</dbReference>
<dbReference type="GO" id="GO:0003746">
    <property type="term" value="F:translation elongation factor activity"/>
    <property type="evidence" value="ECO:0007669"/>
    <property type="project" value="UniProtKB-UniRule"/>
</dbReference>
<dbReference type="CDD" id="cd01884">
    <property type="entry name" value="EF_Tu"/>
    <property type="match status" value="1"/>
</dbReference>
<dbReference type="CDD" id="cd03697">
    <property type="entry name" value="EFTU_II"/>
    <property type="match status" value="1"/>
</dbReference>
<dbReference type="CDD" id="cd03707">
    <property type="entry name" value="EFTU_III"/>
    <property type="match status" value="1"/>
</dbReference>
<dbReference type="FunFam" id="2.40.30.10:FF:000001">
    <property type="entry name" value="Elongation factor Tu"/>
    <property type="match status" value="1"/>
</dbReference>
<dbReference type="FunFam" id="3.40.50.300:FF:000003">
    <property type="entry name" value="Elongation factor Tu"/>
    <property type="match status" value="1"/>
</dbReference>
<dbReference type="Gene3D" id="3.40.50.300">
    <property type="entry name" value="P-loop containing nucleotide triphosphate hydrolases"/>
    <property type="match status" value="1"/>
</dbReference>
<dbReference type="Gene3D" id="2.40.30.10">
    <property type="entry name" value="Translation factors"/>
    <property type="match status" value="2"/>
</dbReference>
<dbReference type="HAMAP" id="MF_00118_B">
    <property type="entry name" value="EF_Tu_B"/>
    <property type="match status" value="1"/>
</dbReference>
<dbReference type="InterPro" id="IPR041709">
    <property type="entry name" value="EF-Tu_GTP-bd"/>
</dbReference>
<dbReference type="InterPro" id="IPR050055">
    <property type="entry name" value="EF-Tu_GTPase"/>
</dbReference>
<dbReference type="InterPro" id="IPR004161">
    <property type="entry name" value="EFTu-like_2"/>
</dbReference>
<dbReference type="InterPro" id="IPR033720">
    <property type="entry name" value="EFTU_2"/>
</dbReference>
<dbReference type="InterPro" id="IPR031157">
    <property type="entry name" value="G_TR_CS"/>
</dbReference>
<dbReference type="InterPro" id="IPR027417">
    <property type="entry name" value="P-loop_NTPase"/>
</dbReference>
<dbReference type="InterPro" id="IPR005225">
    <property type="entry name" value="Small_GTP-bd"/>
</dbReference>
<dbReference type="InterPro" id="IPR000795">
    <property type="entry name" value="T_Tr_GTP-bd_dom"/>
</dbReference>
<dbReference type="InterPro" id="IPR009000">
    <property type="entry name" value="Transl_B-barrel_sf"/>
</dbReference>
<dbReference type="InterPro" id="IPR009001">
    <property type="entry name" value="Transl_elong_EF1A/Init_IF2_C"/>
</dbReference>
<dbReference type="InterPro" id="IPR004541">
    <property type="entry name" value="Transl_elong_EFTu/EF1A_bac/org"/>
</dbReference>
<dbReference type="InterPro" id="IPR004160">
    <property type="entry name" value="Transl_elong_EFTu/EF1A_C"/>
</dbReference>
<dbReference type="NCBIfam" id="TIGR00485">
    <property type="entry name" value="EF-Tu"/>
    <property type="match status" value="1"/>
</dbReference>
<dbReference type="NCBIfam" id="NF000766">
    <property type="entry name" value="PRK00049.1"/>
    <property type="match status" value="1"/>
</dbReference>
<dbReference type="NCBIfam" id="NF009372">
    <property type="entry name" value="PRK12735.1"/>
    <property type="match status" value="1"/>
</dbReference>
<dbReference type="NCBIfam" id="NF009373">
    <property type="entry name" value="PRK12736.1"/>
    <property type="match status" value="1"/>
</dbReference>
<dbReference type="NCBIfam" id="TIGR00231">
    <property type="entry name" value="small_GTP"/>
    <property type="match status" value="1"/>
</dbReference>
<dbReference type="PANTHER" id="PTHR43721:SF22">
    <property type="entry name" value="ELONGATION FACTOR TU, MITOCHONDRIAL"/>
    <property type="match status" value="1"/>
</dbReference>
<dbReference type="PANTHER" id="PTHR43721">
    <property type="entry name" value="ELONGATION FACTOR TU-RELATED"/>
    <property type="match status" value="1"/>
</dbReference>
<dbReference type="Pfam" id="PF00009">
    <property type="entry name" value="GTP_EFTU"/>
    <property type="match status" value="1"/>
</dbReference>
<dbReference type="Pfam" id="PF03144">
    <property type="entry name" value="GTP_EFTU_D2"/>
    <property type="match status" value="1"/>
</dbReference>
<dbReference type="Pfam" id="PF03143">
    <property type="entry name" value="GTP_EFTU_D3"/>
    <property type="match status" value="1"/>
</dbReference>
<dbReference type="PRINTS" id="PR00315">
    <property type="entry name" value="ELONGATNFCT"/>
</dbReference>
<dbReference type="SUPFAM" id="SSF50465">
    <property type="entry name" value="EF-Tu/eEF-1alpha/eIF2-gamma C-terminal domain"/>
    <property type="match status" value="1"/>
</dbReference>
<dbReference type="SUPFAM" id="SSF52540">
    <property type="entry name" value="P-loop containing nucleoside triphosphate hydrolases"/>
    <property type="match status" value="1"/>
</dbReference>
<dbReference type="SUPFAM" id="SSF50447">
    <property type="entry name" value="Translation proteins"/>
    <property type="match status" value="1"/>
</dbReference>
<dbReference type="PROSITE" id="PS00301">
    <property type="entry name" value="G_TR_1"/>
    <property type="match status" value="1"/>
</dbReference>
<dbReference type="PROSITE" id="PS51722">
    <property type="entry name" value="G_TR_2"/>
    <property type="match status" value="1"/>
</dbReference>
<proteinExistence type="inferred from homology"/>